<protein>
    <recommendedName>
        <fullName evidence="4">Type II methyltransferase M.Sau3AI</fullName>
        <shortName evidence="5">M.Sau3AI</shortName>
        <ecNumber>2.1.1.37</ecNumber>
    </recommendedName>
    <alternativeName>
        <fullName>Cytosine-specific methyltransferase Sau3AI</fullName>
    </alternativeName>
    <alternativeName>
        <fullName>Modification methylase Sau3AI</fullName>
    </alternativeName>
</protein>
<feature type="chain" id="PRO_0000087907" description="Type II methyltransferase M.Sau3AI">
    <location>
        <begin position="1"/>
        <end position="412"/>
    </location>
</feature>
<feature type="domain" description="SAM-dependent MTase C5-type" evidence="1">
    <location>
        <begin position="4"/>
        <end position="402"/>
    </location>
</feature>
<feature type="active site" evidence="1 2">
    <location>
        <position position="85"/>
    </location>
</feature>
<gene>
    <name type="primary">sau3AIM</name>
</gene>
<accession>P16668</accession>
<organism>
    <name type="scientific">Staphylococcus aureus</name>
    <dbReference type="NCBI Taxonomy" id="1280"/>
    <lineage>
        <taxon>Bacteria</taxon>
        <taxon>Bacillati</taxon>
        <taxon>Bacillota</taxon>
        <taxon>Bacilli</taxon>
        <taxon>Bacillales</taxon>
        <taxon>Staphylococcaceae</taxon>
        <taxon>Staphylococcus</taxon>
    </lineage>
</organism>
<proteinExistence type="inferred from homology"/>
<evidence type="ECO:0000255" key="1">
    <source>
        <dbReference type="PROSITE-ProRule" id="PRU01016"/>
    </source>
</evidence>
<evidence type="ECO:0000255" key="2">
    <source>
        <dbReference type="PROSITE-ProRule" id="PRU10018"/>
    </source>
</evidence>
<evidence type="ECO:0000269" key="3">
    <source>
    </source>
</evidence>
<evidence type="ECO:0000303" key="4">
    <source>
    </source>
</evidence>
<evidence type="ECO:0000303" key="5">
    <source>
    </source>
</evidence>
<dbReference type="EC" id="2.1.1.37"/>
<dbReference type="EMBL" id="M32470">
    <property type="protein sequence ID" value="AAA26673.1"/>
    <property type="molecule type" value="Genomic_DNA"/>
</dbReference>
<dbReference type="PIR" id="JQ0760">
    <property type="entry name" value="JQ0760"/>
</dbReference>
<dbReference type="RefSeq" id="WP_001033636.1">
    <property type="nucleotide sequence ID" value="NZ_WOUL01000015.1"/>
</dbReference>
<dbReference type="SMR" id="P16668"/>
<dbReference type="REBASE" id="252066">
    <property type="entry name" value="M.Psp7025ORF2592P"/>
</dbReference>
<dbReference type="REBASE" id="256731">
    <property type="entry name" value="M.Ssp9304ORF1496P"/>
</dbReference>
<dbReference type="PRO" id="PR:P16668"/>
<dbReference type="GO" id="GO:0003886">
    <property type="term" value="F:DNA (cytosine-5-)-methyltransferase activity"/>
    <property type="evidence" value="ECO:0007669"/>
    <property type="project" value="UniProtKB-EC"/>
</dbReference>
<dbReference type="GO" id="GO:0003677">
    <property type="term" value="F:DNA binding"/>
    <property type="evidence" value="ECO:0007669"/>
    <property type="project" value="UniProtKB-KW"/>
</dbReference>
<dbReference type="GO" id="GO:0009307">
    <property type="term" value="P:DNA restriction-modification system"/>
    <property type="evidence" value="ECO:0007669"/>
    <property type="project" value="UniProtKB-KW"/>
</dbReference>
<dbReference type="GO" id="GO:0032259">
    <property type="term" value="P:methylation"/>
    <property type="evidence" value="ECO:0007669"/>
    <property type="project" value="UniProtKB-KW"/>
</dbReference>
<dbReference type="CDD" id="cd00315">
    <property type="entry name" value="Cyt_C5_DNA_methylase"/>
    <property type="match status" value="1"/>
</dbReference>
<dbReference type="Gene3D" id="3.90.120.10">
    <property type="entry name" value="DNA Methylase, subunit A, domain 2"/>
    <property type="match status" value="1"/>
</dbReference>
<dbReference type="Gene3D" id="3.40.50.150">
    <property type="entry name" value="Vaccinia Virus protein VP39"/>
    <property type="match status" value="1"/>
</dbReference>
<dbReference type="InterPro" id="IPR050750">
    <property type="entry name" value="C5-MTase"/>
</dbReference>
<dbReference type="InterPro" id="IPR018117">
    <property type="entry name" value="C5_DNA_meth_AS"/>
</dbReference>
<dbReference type="InterPro" id="IPR001525">
    <property type="entry name" value="C5_MeTfrase"/>
</dbReference>
<dbReference type="InterPro" id="IPR031303">
    <property type="entry name" value="C5_meth_CS"/>
</dbReference>
<dbReference type="InterPro" id="IPR029063">
    <property type="entry name" value="SAM-dependent_MTases_sf"/>
</dbReference>
<dbReference type="NCBIfam" id="TIGR00675">
    <property type="entry name" value="dcm"/>
    <property type="match status" value="1"/>
</dbReference>
<dbReference type="PANTHER" id="PTHR46098">
    <property type="entry name" value="TRNA (CYTOSINE(38)-C(5))-METHYLTRANSFERASE"/>
    <property type="match status" value="1"/>
</dbReference>
<dbReference type="PANTHER" id="PTHR46098:SF1">
    <property type="entry name" value="TRNA (CYTOSINE(38)-C(5))-METHYLTRANSFERASE"/>
    <property type="match status" value="1"/>
</dbReference>
<dbReference type="Pfam" id="PF00145">
    <property type="entry name" value="DNA_methylase"/>
    <property type="match status" value="1"/>
</dbReference>
<dbReference type="PRINTS" id="PR00105">
    <property type="entry name" value="C5METTRFRASE"/>
</dbReference>
<dbReference type="SUPFAM" id="SSF53335">
    <property type="entry name" value="S-adenosyl-L-methionine-dependent methyltransferases"/>
    <property type="match status" value="1"/>
</dbReference>
<dbReference type="PROSITE" id="PS00094">
    <property type="entry name" value="C5_MTASE_1"/>
    <property type="match status" value="1"/>
</dbReference>
<dbReference type="PROSITE" id="PS00095">
    <property type="entry name" value="C5_MTASE_2"/>
    <property type="match status" value="1"/>
</dbReference>
<dbReference type="PROSITE" id="PS51679">
    <property type="entry name" value="SAM_MT_C5"/>
    <property type="match status" value="1"/>
</dbReference>
<keyword id="KW-0238">DNA-binding</keyword>
<keyword id="KW-0489">Methyltransferase</keyword>
<keyword id="KW-0680">Restriction system</keyword>
<keyword id="KW-0949">S-adenosyl-L-methionine</keyword>
<keyword id="KW-0808">Transferase</keyword>
<reference key="1">
    <citation type="journal article" date="1990" name="Gene">
        <title>Cloning, expression and characterization of the Sau3AI restriction and modification genes in Staphylococcus carnosus TM300.</title>
        <authorList>
            <person name="Seeber S."/>
            <person name="Kessler C."/>
            <person name="Goetz F."/>
        </authorList>
    </citation>
    <scope>NUCLEOTIDE SEQUENCE [GENOMIC DNA]</scope>
    <scope>FUNCTION</scope>
    <source>
        <strain>ATCC 49834 / 3A</strain>
    </source>
</reference>
<reference key="2">
    <citation type="journal article" date="2003" name="Nucleic Acids Res.">
        <title>A nomenclature for restriction enzymes, DNA methyltransferases, homing endonucleases and their genes.</title>
        <authorList>
            <person name="Roberts R.J."/>
            <person name="Belfort M."/>
            <person name="Bestor T."/>
            <person name="Bhagwat A.S."/>
            <person name="Bickle T.A."/>
            <person name="Bitinaite J."/>
            <person name="Blumenthal R.M."/>
            <person name="Degtyarev S.K."/>
            <person name="Dryden D.T."/>
            <person name="Dybvig K."/>
            <person name="Firman K."/>
            <person name="Gromova E.S."/>
            <person name="Gumport R.I."/>
            <person name="Halford S.E."/>
            <person name="Hattman S."/>
            <person name="Heitman J."/>
            <person name="Hornby D.P."/>
            <person name="Janulaitis A."/>
            <person name="Jeltsch A."/>
            <person name="Josephsen J."/>
            <person name="Kiss A."/>
            <person name="Klaenhammer T.R."/>
            <person name="Kobayashi I."/>
            <person name="Kong H."/>
            <person name="Krueger D.H."/>
            <person name="Lacks S."/>
            <person name="Marinus M.G."/>
            <person name="Miyahara M."/>
            <person name="Morgan R.D."/>
            <person name="Murray N.E."/>
            <person name="Nagaraja V."/>
            <person name="Piekarowicz A."/>
            <person name="Pingoud A."/>
            <person name="Raleigh E."/>
            <person name="Rao D.N."/>
            <person name="Reich N."/>
            <person name="Repin V.E."/>
            <person name="Selker E.U."/>
            <person name="Shaw P.C."/>
            <person name="Stein D.C."/>
            <person name="Stoddard B.L."/>
            <person name="Szybalski W."/>
            <person name="Trautner T.A."/>
            <person name="Van Etten J.L."/>
            <person name="Vitor J.M."/>
            <person name="Wilson G.G."/>
            <person name="Xu S.Y."/>
        </authorList>
    </citation>
    <scope>NOMENCLATURE</scope>
</reference>
<sequence>MNKIKVVELFAGVGGFRLGLENTKNGIFDITWANQWEPSRKIQHAFDCYSKRFKNGIHSNKDIAQVSDEEMANTEADMIVGGFPCQDYSVARSLNGELGIQGKKGVLFWQIIRYIQNTFPKYLLLENVDRLLKSPSSQRGRDFAVMLSTLNELGYNVEWRVINAADYGNAQRRRRVFIFGYKQDLNYSKAMEESPLDKIIYHNGLFAEAFPIEDYANKNRVNRTHITHDIVDISDNFSFQFYNSGIMKNGEILTIDTIPKYEKSVTLGEIIESNVDDGFSLNQDQIDKFKYLRGPKKIKRTTKDGHEYYFSEGGMSETDSLELPARTMLTSESSINRSTHFLNVDGVYRTLTPIEAERLNGFPDNWTEGMPIKMRYFCMGNALVVPLITRIGNQIEKIDSITNDEFSQLRLF</sequence>
<name>MTS3_STAAU</name>
<comment type="function">
    <text evidence="3 4">A methylase that recognizes the double-stranded sequence 5'-GATC-3', methylates C-4 on both strands and protects the DNA from cleavage by the Sau3AI endonuclease.</text>
</comment>
<comment type="catalytic activity">
    <reaction evidence="2">
        <text>a 2'-deoxycytidine in DNA + S-adenosyl-L-methionine = a 5-methyl-2'-deoxycytidine in DNA + S-adenosyl-L-homocysteine + H(+)</text>
        <dbReference type="Rhea" id="RHEA:13681"/>
        <dbReference type="Rhea" id="RHEA-COMP:11369"/>
        <dbReference type="Rhea" id="RHEA-COMP:11370"/>
        <dbReference type="ChEBI" id="CHEBI:15378"/>
        <dbReference type="ChEBI" id="CHEBI:57856"/>
        <dbReference type="ChEBI" id="CHEBI:59789"/>
        <dbReference type="ChEBI" id="CHEBI:85452"/>
        <dbReference type="ChEBI" id="CHEBI:85454"/>
        <dbReference type="EC" id="2.1.1.37"/>
    </reaction>
</comment>
<comment type="similarity">
    <text evidence="1">Belongs to the class I-like SAM-binding methyltransferase superfamily. C5-methyltransferase family.</text>
</comment>